<accession>P65691</accession>
<accession>A0A1R3Y2U7</accession>
<accession>O53257</accession>
<accession>X2BMF7</accession>
<gene>
    <name evidence="1" type="primary">pfkA</name>
    <name type="ordered locus">BQ2027_MB3035C</name>
</gene>
<protein>
    <recommendedName>
        <fullName evidence="1">ATP-dependent 6-phosphofructokinase</fullName>
        <shortName evidence="1">ATP-PFK</shortName>
        <shortName evidence="1">Phosphofructokinase</shortName>
        <ecNumber evidence="1">2.7.1.11</ecNumber>
    </recommendedName>
    <alternativeName>
        <fullName evidence="1">Phosphohexokinase</fullName>
    </alternativeName>
</protein>
<feature type="chain" id="PRO_0000111969" description="ATP-dependent 6-phosphofructokinase">
    <location>
        <begin position="1"/>
        <end position="343"/>
    </location>
</feature>
<feature type="active site" description="Proton acceptor" evidence="1">
    <location>
        <position position="128"/>
    </location>
</feature>
<feature type="binding site" evidence="1">
    <location>
        <position position="10"/>
    </location>
    <ligand>
        <name>ATP</name>
        <dbReference type="ChEBI" id="CHEBI:30616"/>
    </ligand>
</feature>
<feature type="binding site" evidence="1">
    <location>
        <begin position="73"/>
        <end position="74"/>
    </location>
    <ligand>
        <name>ATP</name>
        <dbReference type="ChEBI" id="CHEBI:30616"/>
    </ligand>
</feature>
<feature type="binding site" evidence="1">
    <location>
        <begin position="103"/>
        <end position="106"/>
    </location>
    <ligand>
        <name>ATP</name>
        <dbReference type="ChEBI" id="CHEBI:30616"/>
    </ligand>
</feature>
<feature type="binding site" evidence="1">
    <location>
        <position position="104"/>
    </location>
    <ligand>
        <name>Mg(2+)</name>
        <dbReference type="ChEBI" id="CHEBI:18420"/>
        <note>catalytic</note>
    </ligand>
</feature>
<feature type="binding site" description="in other chain" evidence="1">
    <location>
        <begin position="126"/>
        <end position="128"/>
    </location>
    <ligand>
        <name>substrate</name>
        <note>ligand shared between dimeric partners</note>
    </ligand>
</feature>
<feature type="binding site" evidence="1">
    <location>
        <position position="163"/>
    </location>
    <ligand>
        <name>substrate</name>
        <note>ligand shared between dimeric partners</note>
    </ligand>
</feature>
<feature type="binding site" description="in other chain" evidence="1">
    <location>
        <begin position="170"/>
        <end position="172"/>
    </location>
    <ligand>
        <name>substrate</name>
        <note>ligand shared between dimeric partners</note>
    </ligand>
</feature>
<feature type="binding site" description="in other chain" evidence="1">
    <location>
        <position position="223"/>
    </location>
    <ligand>
        <name>substrate</name>
        <note>ligand shared between dimeric partners</note>
    </ligand>
</feature>
<feature type="binding site" evidence="1">
    <location>
        <position position="267"/>
    </location>
    <ligand>
        <name>substrate</name>
        <note>ligand shared between dimeric partners</note>
    </ligand>
</feature>
<feature type="binding site" description="in other chain" evidence="1">
    <location>
        <begin position="273"/>
        <end position="276"/>
    </location>
    <ligand>
        <name>substrate</name>
        <note>ligand shared between dimeric partners</note>
    </ligand>
</feature>
<feature type="site" description="Important for substrate specificity; cannot use PPi as phosphoryl donor" evidence="1">
    <location>
        <position position="105"/>
    </location>
</feature>
<reference key="1">
    <citation type="journal article" date="2003" name="Proc. Natl. Acad. Sci. U.S.A.">
        <title>The complete genome sequence of Mycobacterium bovis.</title>
        <authorList>
            <person name="Garnier T."/>
            <person name="Eiglmeier K."/>
            <person name="Camus J.-C."/>
            <person name="Medina N."/>
            <person name="Mansoor H."/>
            <person name="Pryor M."/>
            <person name="Duthoy S."/>
            <person name="Grondin S."/>
            <person name="Lacroix C."/>
            <person name="Monsempe C."/>
            <person name="Simon S."/>
            <person name="Harris B."/>
            <person name="Atkin R."/>
            <person name="Doggett J."/>
            <person name="Mayes R."/>
            <person name="Keating L."/>
            <person name="Wheeler P.R."/>
            <person name="Parkhill J."/>
            <person name="Barrell B.G."/>
            <person name="Cole S.T."/>
            <person name="Gordon S.V."/>
            <person name="Hewinson R.G."/>
        </authorList>
    </citation>
    <scope>NUCLEOTIDE SEQUENCE [LARGE SCALE GENOMIC DNA]</scope>
    <source>
        <strain>ATCC BAA-935 / AF2122/97</strain>
    </source>
</reference>
<reference key="2">
    <citation type="journal article" date="2017" name="Genome Announc.">
        <title>Updated reference genome sequence and annotation of Mycobacterium bovis AF2122/97.</title>
        <authorList>
            <person name="Malone K.M."/>
            <person name="Farrell D."/>
            <person name="Stuber T.P."/>
            <person name="Schubert O.T."/>
            <person name="Aebersold R."/>
            <person name="Robbe-Austerman S."/>
            <person name="Gordon S.V."/>
        </authorList>
    </citation>
    <scope>NUCLEOTIDE SEQUENCE [LARGE SCALE GENOMIC DNA]</scope>
    <scope>GENOME REANNOTATION</scope>
    <source>
        <strain>ATCC BAA-935 / AF2122/97</strain>
    </source>
</reference>
<name>PFKA_MYCBO</name>
<organism>
    <name type="scientific">Mycobacterium bovis (strain ATCC BAA-935 / AF2122/97)</name>
    <dbReference type="NCBI Taxonomy" id="233413"/>
    <lineage>
        <taxon>Bacteria</taxon>
        <taxon>Bacillati</taxon>
        <taxon>Actinomycetota</taxon>
        <taxon>Actinomycetes</taxon>
        <taxon>Mycobacteriales</taxon>
        <taxon>Mycobacteriaceae</taxon>
        <taxon>Mycobacterium</taxon>
        <taxon>Mycobacterium tuberculosis complex</taxon>
    </lineage>
</organism>
<keyword id="KW-0067">ATP-binding</keyword>
<keyword id="KW-0963">Cytoplasm</keyword>
<keyword id="KW-0324">Glycolysis</keyword>
<keyword id="KW-0418">Kinase</keyword>
<keyword id="KW-0460">Magnesium</keyword>
<keyword id="KW-0479">Metal-binding</keyword>
<keyword id="KW-0547">Nucleotide-binding</keyword>
<keyword id="KW-1185">Reference proteome</keyword>
<keyword id="KW-0808">Transferase</keyword>
<evidence type="ECO:0000255" key="1">
    <source>
        <dbReference type="HAMAP-Rule" id="MF_01976"/>
    </source>
</evidence>
<dbReference type="EC" id="2.7.1.11" evidence="1"/>
<dbReference type="EMBL" id="LT708304">
    <property type="protein sequence ID" value="SIU01659.1"/>
    <property type="molecule type" value="Genomic_DNA"/>
</dbReference>
<dbReference type="RefSeq" id="NP_856680.1">
    <property type="nucleotide sequence ID" value="NC_002945.3"/>
</dbReference>
<dbReference type="RefSeq" id="WP_003415251.1">
    <property type="nucleotide sequence ID" value="NC_002945.4"/>
</dbReference>
<dbReference type="SMR" id="P65691"/>
<dbReference type="KEGG" id="mbo:BQ2027_MB3035C"/>
<dbReference type="PATRIC" id="fig|233413.5.peg.3335"/>
<dbReference type="UniPathway" id="UPA00109">
    <property type="reaction ID" value="UER00182"/>
</dbReference>
<dbReference type="Proteomes" id="UP000001419">
    <property type="component" value="Chromosome"/>
</dbReference>
<dbReference type="GO" id="GO:0005945">
    <property type="term" value="C:6-phosphofructokinase complex"/>
    <property type="evidence" value="ECO:0007669"/>
    <property type="project" value="TreeGrafter"/>
</dbReference>
<dbReference type="GO" id="GO:0003872">
    <property type="term" value="F:6-phosphofructokinase activity"/>
    <property type="evidence" value="ECO:0007669"/>
    <property type="project" value="UniProtKB-UniRule"/>
</dbReference>
<dbReference type="GO" id="GO:0016208">
    <property type="term" value="F:AMP binding"/>
    <property type="evidence" value="ECO:0007669"/>
    <property type="project" value="TreeGrafter"/>
</dbReference>
<dbReference type="GO" id="GO:0005524">
    <property type="term" value="F:ATP binding"/>
    <property type="evidence" value="ECO:0007669"/>
    <property type="project" value="UniProtKB-KW"/>
</dbReference>
<dbReference type="GO" id="GO:0047334">
    <property type="term" value="F:diphosphate-fructose-6-phosphate 1-phosphotransferase activity"/>
    <property type="evidence" value="ECO:0007669"/>
    <property type="project" value="InterPro"/>
</dbReference>
<dbReference type="GO" id="GO:0070095">
    <property type="term" value="F:fructose-6-phosphate binding"/>
    <property type="evidence" value="ECO:0007669"/>
    <property type="project" value="TreeGrafter"/>
</dbReference>
<dbReference type="GO" id="GO:0042802">
    <property type="term" value="F:identical protein binding"/>
    <property type="evidence" value="ECO:0007669"/>
    <property type="project" value="TreeGrafter"/>
</dbReference>
<dbReference type="GO" id="GO:0046872">
    <property type="term" value="F:metal ion binding"/>
    <property type="evidence" value="ECO:0007669"/>
    <property type="project" value="UniProtKB-KW"/>
</dbReference>
<dbReference type="GO" id="GO:0048029">
    <property type="term" value="F:monosaccharide binding"/>
    <property type="evidence" value="ECO:0007669"/>
    <property type="project" value="TreeGrafter"/>
</dbReference>
<dbReference type="GO" id="GO:0061621">
    <property type="term" value="P:canonical glycolysis"/>
    <property type="evidence" value="ECO:0007669"/>
    <property type="project" value="TreeGrafter"/>
</dbReference>
<dbReference type="GO" id="GO:0030388">
    <property type="term" value="P:fructose 1,6-bisphosphate metabolic process"/>
    <property type="evidence" value="ECO:0007669"/>
    <property type="project" value="TreeGrafter"/>
</dbReference>
<dbReference type="GO" id="GO:0006002">
    <property type="term" value="P:fructose 6-phosphate metabolic process"/>
    <property type="evidence" value="ECO:0007669"/>
    <property type="project" value="InterPro"/>
</dbReference>
<dbReference type="FunFam" id="3.40.50.460:FF:000005">
    <property type="entry name" value="ATP-dependent 6-phosphofructokinase"/>
    <property type="match status" value="1"/>
</dbReference>
<dbReference type="Gene3D" id="3.40.50.450">
    <property type="match status" value="1"/>
</dbReference>
<dbReference type="Gene3D" id="3.40.50.460">
    <property type="entry name" value="Phosphofructokinase domain"/>
    <property type="match status" value="1"/>
</dbReference>
<dbReference type="HAMAP" id="MF_01976">
    <property type="entry name" value="Phosphofructokinase_III"/>
    <property type="match status" value="1"/>
</dbReference>
<dbReference type="InterPro" id="IPR022953">
    <property type="entry name" value="ATP_PFK"/>
</dbReference>
<dbReference type="InterPro" id="IPR012003">
    <property type="entry name" value="ATP_PFK_prok-type"/>
</dbReference>
<dbReference type="InterPro" id="IPR015912">
    <property type="entry name" value="Phosphofructokinase_CS"/>
</dbReference>
<dbReference type="InterPro" id="IPR000023">
    <property type="entry name" value="Phosphofructokinase_dom"/>
</dbReference>
<dbReference type="InterPro" id="IPR012829">
    <property type="entry name" value="Phosphofructokinase_III"/>
</dbReference>
<dbReference type="InterPro" id="IPR035966">
    <property type="entry name" value="PKF_sf"/>
</dbReference>
<dbReference type="NCBIfam" id="TIGR02483">
    <property type="entry name" value="PFK_mixed"/>
    <property type="match status" value="1"/>
</dbReference>
<dbReference type="NCBIfam" id="NF002872">
    <property type="entry name" value="PRK03202.1"/>
    <property type="match status" value="1"/>
</dbReference>
<dbReference type="PANTHER" id="PTHR13697:SF52">
    <property type="entry name" value="ATP-DEPENDENT 6-PHOSPHOFRUCTOKINASE 3"/>
    <property type="match status" value="1"/>
</dbReference>
<dbReference type="PANTHER" id="PTHR13697">
    <property type="entry name" value="PHOSPHOFRUCTOKINASE"/>
    <property type="match status" value="1"/>
</dbReference>
<dbReference type="Pfam" id="PF00365">
    <property type="entry name" value="PFK"/>
    <property type="match status" value="1"/>
</dbReference>
<dbReference type="PIRSF" id="PIRSF000532">
    <property type="entry name" value="ATP_PFK_prok"/>
    <property type="match status" value="1"/>
</dbReference>
<dbReference type="PRINTS" id="PR00476">
    <property type="entry name" value="PHFRCTKINASE"/>
</dbReference>
<dbReference type="SUPFAM" id="SSF53784">
    <property type="entry name" value="Phosphofructokinase"/>
    <property type="match status" value="1"/>
</dbReference>
<dbReference type="PROSITE" id="PS00433">
    <property type="entry name" value="PHOSPHOFRUCTOKINASE"/>
    <property type="match status" value="1"/>
</dbReference>
<proteinExistence type="inferred from homology"/>
<sequence>MRIGVLTGGGDCPGLNAVIRAVVRTCHARYGSSVVGFQNGFRGLLENRRVQLHNDDRNDRLLAKGGTMLGTARVHPDKLRAGLPQIMQTLDDNGIDVLIPIGGEGTLTAASWLSEENVPVVGVPKTIDNDIDCTDVTFGHDTALTVATEAIDRLHSTAESHERVMLVEVMGRHAGWIALNAGLASGAHMTLIPEQPFDIEEVCRLVKGRFQRGDSHFICVVAEGAKPAPGTIMLREGGLDEFGHERFTGVAAQLAVEVEKRINKDVRVTVLGHIQRGGTPTAYDRVLATRFGVNAADAAHAGEYGQMVTLRGQDIGRVPLADAVRKLKLVPQSRYDDAAAFFG</sequence>
<comment type="function">
    <text evidence="1">Catalyzes the phosphorylation of D-fructose 6-phosphate to fructose 1,6-bisphosphate by ATP, the first committing step of glycolysis.</text>
</comment>
<comment type="catalytic activity">
    <reaction evidence="1">
        <text>beta-D-fructose 6-phosphate + ATP = beta-D-fructose 1,6-bisphosphate + ADP + H(+)</text>
        <dbReference type="Rhea" id="RHEA:16109"/>
        <dbReference type="ChEBI" id="CHEBI:15378"/>
        <dbReference type="ChEBI" id="CHEBI:30616"/>
        <dbReference type="ChEBI" id="CHEBI:32966"/>
        <dbReference type="ChEBI" id="CHEBI:57634"/>
        <dbReference type="ChEBI" id="CHEBI:456216"/>
        <dbReference type="EC" id="2.7.1.11"/>
    </reaction>
</comment>
<comment type="cofactor">
    <cofactor evidence="1">
        <name>Mg(2+)</name>
        <dbReference type="ChEBI" id="CHEBI:18420"/>
    </cofactor>
</comment>
<comment type="pathway">
    <text evidence="1">Carbohydrate degradation; glycolysis; D-glyceraldehyde 3-phosphate and glycerone phosphate from D-glucose: step 3/4.</text>
</comment>
<comment type="subunit">
    <text evidence="1">Homodimer or homotetramer.</text>
</comment>
<comment type="subcellular location">
    <subcellularLocation>
        <location evidence="1">Cytoplasm</location>
    </subcellularLocation>
</comment>
<comment type="similarity">
    <text evidence="1">Belongs to the phosphofructokinase type A (PFKA) family. Mixed-substrate PFK group III subfamily.</text>
</comment>